<feature type="initiator methionine" description="Removed" evidence="15">
    <location>
        <position position="1"/>
    </location>
</feature>
<feature type="chain" id="PRO_0000318701" description="Shiftless antiviral inhibitor of ribosomal frameshifting protein">
    <location>
        <begin position="2"/>
        <end position="291"/>
    </location>
</feature>
<feature type="region of interest" description="Disordered" evidence="1">
    <location>
        <begin position="51"/>
        <end position="71"/>
    </location>
</feature>
<feature type="region of interest" description="Interaction with PABPC1" evidence="2">
    <location>
        <begin position="102"/>
        <end position="150"/>
    </location>
</feature>
<feature type="region of interest" description="Disordered" evidence="1">
    <location>
        <begin position="221"/>
        <end position="250"/>
    </location>
</feature>
<feature type="region of interest" description="Disordered" evidence="1">
    <location>
        <begin position="270"/>
        <end position="291"/>
    </location>
</feature>
<feature type="short sequence motif" description="Nuclear localization signal" evidence="2">
    <location>
        <begin position="121"/>
        <end position="137"/>
    </location>
</feature>
<feature type="short sequence motif" description="Nuclear export signal" evidence="2">
    <location>
        <begin position="261"/>
        <end position="269"/>
    </location>
</feature>
<feature type="compositionally biased region" description="Acidic residues" evidence="1">
    <location>
        <begin position="272"/>
        <end position="291"/>
    </location>
</feature>
<feature type="modified residue" description="N-acetylserine" evidence="15">
    <location>
        <position position="2"/>
    </location>
</feature>
<feature type="splice variant" id="VSP_031272" description="In isoform 2." evidence="8">
    <original>MSQEGVELEKSVRRLREKFHGKVSSKKAGALMRKFGSDHTGVGRSIVYGVKQKDGQELSNDLDAQ</original>
    <variation>MSQHQQACGICRQE</variation>
    <location>
        <begin position="1"/>
        <end position="65"/>
    </location>
</feature>
<feature type="splice variant" id="VSP_031273" description="In isoform 3." evidence="9">
    <location>
        <begin position="164"/>
        <end position="291"/>
    </location>
</feature>
<feature type="splice variant" id="VSP_031274" description="In isoform 4." evidence="9">
    <location>
        <begin position="164"/>
        <end position="199"/>
    </location>
</feature>
<feature type="mutagenesis site" description="Decreased efficiency in the interaction with PABPC1 and reduced inhibitory activity against DENV replication." evidence="2">
    <original>RRVPQRKEVSRCRKCRK</original>
    <variation>AAVPQAAEVSACAACAA</variation>
    <location>
        <begin position="121"/>
        <end position="137"/>
    </location>
</feature>
<feature type="sequence conflict" description="In Ref. 1; BAA92109." evidence="13" ref="1">
    <original>W</original>
    <variation>R</variation>
    <location>
        <position position="191"/>
    </location>
</feature>
<feature type="sequence conflict" description="In Ref. 1; BAA92109." evidence="13" ref="1">
    <original>S</original>
    <variation>P</variation>
    <location>
        <position position="249"/>
    </location>
</feature>
<sequence length="291" mass="33110">MSQEGVELEKSVRRLREKFHGKVSSKKAGALMRKFGSDHTGVGRSIVYGVKQKDGQELSNDLDAQDPPEDMKQDRDIQAVATSLLPLTEANLRMFQRAQDDLIPAVDRQFACSSCDHVWWRRVPQRKEVSRCRKCRKRYEPVPADKMWGLAEFHCPKCRHNFRGWAQMGSPSPCYGCGFPVYPTRILPPRWDRDPDRRSTHTHSCSAADCYNRREPHVPGTSCAHPKSRKQNHLPKVLHPSNPHISSGSTVATCLSQGGLLEDLDNLILEDLKEEEEEEEEVEDEEGGPRE</sequence>
<gene>
    <name evidence="14" type="primary">SHFL</name>
    <name type="synonym">C19orf66</name>
    <name evidence="11" type="synonym">FLJ11286</name>
    <name evidence="11" type="synonym">IRAV</name>
    <name evidence="10" type="synonym">RYDEN</name>
    <name evidence="12" type="synonym">SFL</name>
</gene>
<keyword id="KW-0007">Acetylation</keyword>
<keyword id="KW-0025">Alternative splicing</keyword>
<keyword id="KW-0051">Antiviral defense</keyword>
<keyword id="KW-0963">Cytoplasm</keyword>
<keyword id="KW-0539">Nucleus</keyword>
<keyword id="KW-1267">Proteomics identification</keyword>
<keyword id="KW-1185">Reference proteome</keyword>
<keyword id="KW-0694">RNA-binding</keyword>
<dbReference type="EMBL" id="AK002148">
    <property type="protein sequence ID" value="BAA92109.1"/>
    <property type="molecule type" value="mRNA"/>
</dbReference>
<dbReference type="EMBL" id="AK096142">
    <property type="protein sequence ID" value="BAC04710.1"/>
    <property type="molecule type" value="mRNA"/>
</dbReference>
<dbReference type="EMBL" id="AC020931">
    <property type="status" value="NOT_ANNOTATED_CDS"/>
    <property type="molecule type" value="Genomic_DNA"/>
</dbReference>
<dbReference type="EMBL" id="CH471106">
    <property type="protein sequence ID" value="EAW84066.1"/>
    <property type="molecule type" value="Genomic_DNA"/>
</dbReference>
<dbReference type="EMBL" id="CH471106">
    <property type="protein sequence ID" value="EAW84068.1"/>
    <property type="molecule type" value="Genomic_DNA"/>
</dbReference>
<dbReference type="EMBL" id="CH471106">
    <property type="protein sequence ID" value="EAW84069.1"/>
    <property type="molecule type" value="Genomic_DNA"/>
</dbReference>
<dbReference type="EMBL" id="BC010847">
    <property type="protein sequence ID" value="AAH10847.1"/>
    <property type="molecule type" value="mRNA"/>
</dbReference>
<dbReference type="EMBL" id="BC026180">
    <property type="protein sequence ID" value="AAH26180.1"/>
    <property type="molecule type" value="mRNA"/>
</dbReference>
<dbReference type="EMBL" id="BC035817">
    <property type="protein sequence ID" value="AAH35817.1"/>
    <property type="molecule type" value="mRNA"/>
</dbReference>
<dbReference type="CCDS" id="CCDS45957.1">
    <molecule id="Q9NUL5-1"/>
</dbReference>
<dbReference type="CCDS" id="CCDS77231.1">
    <molecule id="Q9NUL5-4"/>
</dbReference>
<dbReference type="RefSeq" id="NP_001295206.1">
    <molecule id="Q9NUL5-4"/>
    <property type="nucleotide sequence ID" value="NM_001308277.2"/>
</dbReference>
<dbReference type="RefSeq" id="NP_060851.2">
    <molecule id="Q9NUL5-1"/>
    <property type="nucleotide sequence ID" value="NM_018381.4"/>
</dbReference>
<dbReference type="RefSeq" id="XP_016882423.1">
    <property type="nucleotide sequence ID" value="XM_017026934.1"/>
</dbReference>
<dbReference type="RefSeq" id="XP_047295003.1">
    <molecule id="Q9NUL5-2"/>
    <property type="nucleotide sequence ID" value="XM_047439047.1"/>
</dbReference>
<dbReference type="RefSeq" id="XP_054177352.1">
    <molecule id="Q9NUL5-2"/>
    <property type="nucleotide sequence ID" value="XM_054321377.1"/>
</dbReference>
<dbReference type="SMR" id="Q9NUL5"/>
<dbReference type="BioGRID" id="120618">
    <property type="interactions" value="106"/>
</dbReference>
<dbReference type="CORUM" id="Q9NUL5"/>
<dbReference type="FunCoup" id="Q9NUL5">
    <property type="interactions" value="1194"/>
</dbReference>
<dbReference type="IntAct" id="Q9NUL5">
    <property type="interactions" value="91"/>
</dbReference>
<dbReference type="STRING" id="9606.ENSP00000253110"/>
<dbReference type="GlyGen" id="Q9NUL5">
    <property type="glycosylation" value="1 site, 1 O-linked glycan (1 site)"/>
</dbReference>
<dbReference type="iPTMnet" id="Q9NUL5"/>
<dbReference type="PhosphoSitePlus" id="Q9NUL5"/>
<dbReference type="BioMuta" id="C19orf66"/>
<dbReference type="DMDM" id="172044675"/>
<dbReference type="jPOST" id="Q9NUL5"/>
<dbReference type="MassIVE" id="Q9NUL5"/>
<dbReference type="PaxDb" id="9606-ENSP00000253110"/>
<dbReference type="PeptideAtlas" id="Q9NUL5"/>
<dbReference type="ProteomicsDB" id="82688">
    <molecule id="Q9NUL5-1"/>
</dbReference>
<dbReference type="ProteomicsDB" id="82689">
    <molecule id="Q9NUL5-2"/>
</dbReference>
<dbReference type="ProteomicsDB" id="82690">
    <molecule id="Q9NUL5-3"/>
</dbReference>
<dbReference type="ProteomicsDB" id="82691">
    <molecule id="Q9NUL5-4"/>
</dbReference>
<dbReference type="Pumba" id="Q9NUL5"/>
<dbReference type="Antibodypedia" id="51349">
    <property type="antibodies" value="32 antibodies from 10 providers"/>
</dbReference>
<dbReference type="DNASU" id="55337"/>
<dbReference type="Ensembl" id="ENST00000253110.16">
    <molecule id="Q9NUL5-1"/>
    <property type="protein sequence ID" value="ENSP00000253110.10"/>
    <property type="gene ID" value="ENSG00000130813.18"/>
</dbReference>
<dbReference type="Ensembl" id="ENST00000397881.7">
    <molecule id="Q9NUL5-2"/>
    <property type="protein sequence ID" value="ENSP00000380978.3"/>
    <property type="gene ID" value="ENSG00000130813.18"/>
</dbReference>
<dbReference type="Ensembl" id="ENST00000591813.5">
    <molecule id="Q9NUL5-4"/>
    <property type="protein sequence ID" value="ENSP00000467182.1"/>
    <property type="gene ID" value="ENSG00000130813.18"/>
</dbReference>
<dbReference type="GeneID" id="55337"/>
<dbReference type="KEGG" id="hsa:55337"/>
<dbReference type="MANE-Select" id="ENST00000253110.16">
    <property type="protein sequence ID" value="ENSP00000253110.10"/>
    <property type="RefSeq nucleotide sequence ID" value="NM_018381.4"/>
    <property type="RefSeq protein sequence ID" value="NP_060851.2"/>
</dbReference>
<dbReference type="UCSC" id="uc002mmu.5">
    <molecule id="Q9NUL5-1"/>
    <property type="organism name" value="human"/>
</dbReference>
<dbReference type="AGR" id="HGNC:25649"/>
<dbReference type="CTD" id="55337"/>
<dbReference type="DisGeNET" id="55337"/>
<dbReference type="GeneCards" id="SHFL"/>
<dbReference type="HGNC" id="HGNC:25649">
    <property type="gene designation" value="SHFL"/>
</dbReference>
<dbReference type="HPA" id="ENSG00000130813">
    <property type="expression patterns" value="Tissue enhanced (liver)"/>
</dbReference>
<dbReference type="MalaCards" id="SHFL"/>
<dbReference type="MIM" id="616808">
    <property type="type" value="gene"/>
</dbReference>
<dbReference type="neXtProt" id="NX_Q9NUL5"/>
<dbReference type="OpenTargets" id="ENSG00000130813"/>
<dbReference type="PharmGKB" id="PA162378809"/>
<dbReference type="VEuPathDB" id="HostDB:ENSG00000130813"/>
<dbReference type="eggNOG" id="ENOG502QVND">
    <property type="taxonomic scope" value="Eukaryota"/>
</dbReference>
<dbReference type="GeneTree" id="ENSGT00390000005065"/>
<dbReference type="HOGENOM" id="CLU_087318_0_0_1"/>
<dbReference type="InParanoid" id="Q9NUL5"/>
<dbReference type="OMA" id="PVPKDKM"/>
<dbReference type="OrthoDB" id="9423182at2759"/>
<dbReference type="PAN-GO" id="Q9NUL5">
    <property type="GO annotations" value="4 GO annotations based on evolutionary models"/>
</dbReference>
<dbReference type="PhylomeDB" id="Q9NUL5"/>
<dbReference type="TreeFam" id="TF337433"/>
<dbReference type="PathwayCommons" id="Q9NUL5"/>
<dbReference type="SignaLink" id="Q9NUL5"/>
<dbReference type="BioGRID-ORCS" id="55337">
    <property type="hits" value="20 hits in 1121 CRISPR screens"/>
</dbReference>
<dbReference type="ChiTaRS" id="C19orf66">
    <property type="organism name" value="human"/>
</dbReference>
<dbReference type="GenomeRNAi" id="55337"/>
<dbReference type="Pharos" id="Q9NUL5">
    <property type="development level" value="Tdark"/>
</dbReference>
<dbReference type="PRO" id="PR:Q9NUL5"/>
<dbReference type="Proteomes" id="UP000005640">
    <property type="component" value="Chromosome 19"/>
</dbReference>
<dbReference type="RNAct" id="Q9NUL5">
    <property type="molecule type" value="protein"/>
</dbReference>
<dbReference type="Bgee" id="ENSG00000130813">
    <property type="expression patterns" value="Expressed in right lobe of liver and 196 other cell types or tissues"/>
</dbReference>
<dbReference type="ExpressionAtlas" id="Q9NUL5">
    <property type="expression patterns" value="baseline and differential"/>
</dbReference>
<dbReference type="GO" id="GO:0005737">
    <property type="term" value="C:cytoplasm"/>
    <property type="evidence" value="ECO:0000314"/>
    <property type="project" value="UniProtKB"/>
</dbReference>
<dbReference type="GO" id="GO:0005829">
    <property type="term" value="C:cytosol"/>
    <property type="evidence" value="ECO:0000314"/>
    <property type="project" value="HPA"/>
</dbReference>
<dbReference type="GO" id="GO:0005654">
    <property type="term" value="C:nucleoplasm"/>
    <property type="evidence" value="ECO:0000314"/>
    <property type="project" value="HPA"/>
</dbReference>
<dbReference type="GO" id="GO:0005634">
    <property type="term" value="C:nucleus"/>
    <property type="evidence" value="ECO:0000314"/>
    <property type="project" value="UniProtKB"/>
</dbReference>
<dbReference type="GO" id="GO:0000932">
    <property type="term" value="C:P-body"/>
    <property type="evidence" value="ECO:0000314"/>
    <property type="project" value="UniProtKB"/>
</dbReference>
<dbReference type="GO" id="GO:0042802">
    <property type="term" value="F:identical protein binding"/>
    <property type="evidence" value="ECO:0000353"/>
    <property type="project" value="IntAct"/>
</dbReference>
<dbReference type="GO" id="GO:0043022">
    <property type="term" value="F:ribosome binding"/>
    <property type="evidence" value="ECO:0000314"/>
    <property type="project" value="UniProtKB"/>
</dbReference>
<dbReference type="GO" id="GO:0003723">
    <property type="term" value="F:RNA binding"/>
    <property type="evidence" value="ECO:0000314"/>
    <property type="project" value="UniProtKB"/>
</dbReference>
<dbReference type="GO" id="GO:1990825">
    <property type="term" value="F:sequence-specific mRNA binding"/>
    <property type="evidence" value="ECO:0000314"/>
    <property type="project" value="UniProtKB"/>
</dbReference>
<dbReference type="GO" id="GO:0051607">
    <property type="term" value="P:defense response to virus"/>
    <property type="evidence" value="ECO:0000314"/>
    <property type="project" value="UniProtKB"/>
</dbReference>
<dbReference type="GO" id="GO:0045087">
    <property type="term" value="P:innate immune response"/>
    <property type="evidence" value="ECO:0000318"/>
    <property type="project" value="GO_Central"/>
</dbReference>
<dbReference type="GO" id="GO:2001125">
    <property type="term" value="P:negative regulation of translational frameshifting"/>
    <property type="evidence" value="ECO:0000314"/>
    <property type="project" value="UniProtKB"/>
</dbReference>
<dbReference type="GO" id="GO:0045071">
    <property type="term" value="P:negative regulation of viral genome replication"/>
    <property type="evidence" value="ECO:0000315"/>
    <property type="project" value="UniProtKB"/>
</dbReference>
<dbReference type="GO" id="GO:0006449">
    <property type="term" value="P:regulation of translational termination"/>
    <property type="evidence" value="ECO:0000314"/>
    <property type="project" value="UniProtKB"/>
</dbReference>
<dbReference type="GO" id="GO:0035456">
    <property type="term" value="P:response to interferon-beta"/>
    <property type="evidence" value="ECO:0000314"/>
    <property type="project" value="UniProtKB"/>
</dbReference>
<dbReference type="GO" id="GO:0034340">
    <property type="term" value="P:response to type I interferon"/>
    <property type="evidence" value="ECO:0000314"/>
    <property type="project" value="UniProtKB"/>
</dbReference>
<dbReference type="GO" id="GO:0034341">
    <property type="term" value="P:response to type II interferon"/>
    <property type="evidence" value="ECO:0000314"/>
    <property type="project" value="UniProtKB"/>
</dbReference>
<dbReference type="GO" id="GO:0034342">
    <property type="term" value="P:response to type III interferon"/>
    <property type="evidence" value="ECO:0000314"/>
    <property type="project" value="UniProtKB"/>
</dbReference>
<dbReference type="GO" id="GO:0075523">
    <property type="term" value="P:viral translational frameshifting"/>
    <property type="evidence" value="ECO:0000314"/>
    <property type="project" value="UniProtKB"/>
</dbReference>
<dbReference type="InterPro" id="IPR026795">
    <property type="entry name" value="SHFL"/>
</dbReference>
<dbReference type="PANTHER" id="PTHR16135">
    <property type="entry name" value="REPRESSOR OF YIELD OF DENV PROTEIN"/>
    <property type="match status" value="1"/>
</dbReference>
<dbReference type="PANTHER" id="PTHR16135:SF2">
    <property type="entry name" value="SHIFTLESS ANTIVIRAL INHIBITOR OF RIBOSOMAL FRAMESHIFTING PROTEIN"/>
    <property type="match status" value="1"/>
</dbReference>
<dbReference type="Pfam" id="PF15135">
    <property type="entry name" value="UPF0515"/>
    <property type="match status" value="1"/>
</dbReference>
<evidence type="ECO:0000256" key="1">
    <source>
        <dbReference type="SAM" id="MobiDB-lite"/>
    </source>
</evidence>
<evidence type="ECO:0000269" key="2">
    <source>
    </source>
</evidence>
<evidence type="ECO:0000269" key="3">
    <source>
    </source>
</evidence>
<evidence type="ECO:0000269" key="4">
    <source>
    </source>
</evidence>
<evidence type="ECO:0000269" key="5">
    <source>
    </source>
</evidence>
<evidence type="ECO:0000269" key="6">
    <source>
    </source>
</evidence>
<evidence type="ECO:0000269" key="7">
    <source>
    </source>
</evidence>
<evidence type="ECO:0000303" key="8">
    <source>
    </source>
</evidence>
<evidence type="ECO:0000303" key="9">
    <source>
    </source>
</evidence>
<evidence type="ECO:0000303" key="10">
    <source>
    </source>
</evidence>
<evidence type="ECO:0000303" key="11">
    <source>
    </source>
</evidence>
<evidence type="ECO:0000303" key="12">
    <source>
    </source>
</evidence>
<evidence type="ECO:0000305" key="13"/>
<evidence type="ECO:0000312" key="14">
    <source>
        <dbReference type="HGNC" id="HGNC:25649"/>
    </source>
</evidence>
<evidence type="ECO:0007744" key="15">
    <source>
    </source>
</evidence>
<name>SHFL_HUMAN</name>
<organism>
    <name type="scientific">Homo sapiens</name>
    <name type="common">Human</name>
    <dbReference type="NCBI Taxonomy" id="9606"/>
    <lineage>
        <taxon>Eukaryota</taxon>
        <taxon>Metazoa</taxon>
        <taxon>Chordata</taxon>
        <taxon>Craniata</taxon>
        <taxon>Vertebrata</taxon>
        <taxon>Euteleostomi</taxon>
        <taxon>Mammalia</taxon>
        <taxon>Eutheria</taxon>
        <taxon>Euarchontoglires</taxon>
        <taxon>Primates</taxon>
        <taxon>Haplorrhini</taxon>
        <taxon>Catarrhini</taxon>
        <taxon>Hominidae</taxon>
        <taxon>Homo</taxon>
    </lineage>
</organism>
<reference key="1">
    <citation type="journal article" date="2004" name="Nat. Genet.">
        <title>Complete sequencing and characterization of 21,243 full-length human cDNAs.</title>
        <authorList>
            <person name="Ota T."/>
            <person name="Suzuki Y."/>
            <person name="Nishikawa T."/>
            <person name="Otsuki T."/>
            <person name="Sugiyama T."/>
            <person name="Irie R."/>
            <person name="Wakamatsu A."/>
            <person name="Hayashi K."/>
            <person name="Sato H."/>
            <person name="Nagai K."/>
            <person name="Kimura K."/>
            <person name="Makita H."/>
            <person name="Sekine M."/>
            <person name="Obayashi M."/>
            <person name="Nishi T."/>
            <person name="Shibahara T."/>
            <person name="Tanaka T."/>
            <person name="Ishii S."/>
            <person name="Yamamoto J."/>
            <person name="Saito K."/>
            <person name="Kawai Y."/>
            <person name="Isono Y."/>
            <person name="Nakamura Y."/>
            <person name="Nagahari K."/>
            <person name="Murakami K."/>
            <person name="Yasuda T."/>
            <person name="Iwayanagi T."/>
            <person name="Wagatsuma M."/>
            <person name="Shiratori A."/>
            <person name="Sudo H."/>
            <person name="Hosoiri T."/>
            <person name="Kaku Y."/>
            <person name="Kodaira H."/>
            <person name="Kondo H."/>
            <person name="Sugawara M."/>
            <person name="Takahashi M."/>
            <person name="Kanda K."/>
            <person name="Yokoi T."/>
            <person name="Furuya T."/>
            <person name="Kikkawa E."/>
            <person name="Omura Y."/>
            <person name="Abe K."/>
            <person name="Kamihara K."/>
            <person name="Katsuta N."/>
            <person name="Sato K."/>
            <person name="Tanikawa M."/>
            <person name="Yamazaki M."/>
            <person name="Ninomiya K."/>
            <person name="Ishibashi T."/>
            <person name="Yamashita H."/>
            <person name="Murakawa K."/>
            <person name="Fujimori K."/>
            <person name="Tanai H."/>
            <person name="Kimata M."/>
            <person name="Watanabe M."/>
            <person name="Hiraoka S."/>
            <person name="Chiba Y."/>
            <person name="Ishida S."/>
            <person name="Ono Y."/>
            <person name="Takiguchi S."/>
            <person name="Watanabe S."/>
            <person name="Yosida M."/>
            <person name="Hotuta T."/>
            <person name="Kusano J."/>
            <person name="Kanehori K."/>
            <person name="Takahashi-Fujii A."/>
            <person name="Hara H."/>
            <person name="Tanase T.-O."/>
            <person name="Nomura Y."/>
            <person name="Togiya S."/>
            <person name="Komai F."/>
            <person name="Hara R."/>
            <person name="Takeuchi K."/>
            <person name="Arita M."/>
            <person name="Imose N."/>
            <person name="Musashino K."/>
            <person name="Yuuki H."/>
            <person name="Oshima A."/>
            <person name="Sasaki N."/>
            <person name="Aotsuka S."/>
            <person name="Yoshikawa Y."/>
            <person name="Matsunawa H."/>
            <person name="Ichihara T."/>
            <person name="Shiohata N."/>
            <person name="Sano S."/>
            <person name="Moriya S."/>
            <person name="Momiyama H."/>
            <person name="Satoh N."/>
            <person name="Takami S."/>
            <person name="Terashima Y."/>
            <person name="Suzuki O."/>
            <person name="Nakagawa S."/>
            <person name="Senoh A."/>
            <person name="Mizoguchi H."/>
            <person name="Goto Y."/>
            <person name="Shimizu F."/>
            <person name="Wakebe H."/>
            <person name="Hishigaki H."/>
            <person name="Watanabe T."/>
            <person name="Sugiyama A."/>
            <person name="Takemoto M."/>
            <person name="Kawakami B."/>
            <person name="Yamazaki M."/>
            <person name="Watanabe K."/>
            <person name="Kumagai A."/>
            <person name="Itakura S."/>
            <person name="Fukuzumi Y."/>
            <person name="Fujimori Y."/>
            <person name="Komiyama M."/>
            <person name="Tashiro H."/>
            <person name="Tanigami A."/>
            <person name="Fujiwara T."/>
            <person name="Ono T."/>
            <person name="Yamada K."/>
            <person name="Fujii Y."/>
            <person name="Ozaki K."/>
            <person name="Hirao M."/>
            <person name="Ohmori Y."/>
            <person name="Kawabata A."/>
            <person name="Hikiji T."/>
            <person name="Kobatake N."/>
            <person name="Inagaki H."/>
            <person name="Ikema Y."/>
            <person name="Okamoto S."/>
            <person name="Okitani R."/>
            <person name="Kawakami T."/>
            <person name="Noguchi S."/>
            <person name="Itoh T."/>
            <person name="Shigeta K."/>
            <person name="Senba T."/>
            <person name="Matsumura K."/>
            <person name="Nakajima Y."/>
            <person name="Mizuno T."/>
            <person name="Morinaga M."/>
            <person name="Sasaki M."/>
            <person name="Togashi T."/>
            <person name="Oyama M."/>
            <person name="Hata H."/>
            <person name="Watanabe M."/>
            <person name="Komatsu T."/>
            <person name="Mizushima-Sugano J."/>
            <person name="Satoh T."/>
            <person name="Shirai Y."/>
            <person name="Takahashi Y."/>
            <person name="Nakagawa K."/>
            <person name="Okumura K."/>
            <person name="Nagase T."/>
            <person name="Nomura N."/>
            <person name="Kikuchi H."/>
            <person name="Masuho Y."/>
            <person name="Yamashita R."/>
            <person name="Nakai K."/>
            <person name="Yada T."/>
            <person name="Nakamura Y."/>
            <person name="Ohara O."/>
            <person name="Isogai T."/>
            <person name="Sugano S."/>
        </authorList>
    </citation>
    <scope>NUCLEOTIDE SEQUENCE [LARGE SCALE MRNA] (ISOFORMS 1 AND 2)</scope>
    <source>
        <tissue>Liver</tissue>
        <tissue>Placenta</tissue>
    </source>
</reference>
<reference key="2">
    <citation type="journal article" date="2004" name="Nature">
        <title>The DNA sequence and biology of human chromosome 19.</title>
        <authorList>
            <person name="Grimwood J."/>
            <person name="Gordon L.A."/>
            <person name="Olsen A.S."/>
            <person name="Terry A."/>
            <person name="Schmutz J."/>
            <person name="Lamerdin J.E."/>
            <person name="Hellsten U."/>
            <person name="Goodstein D."/>
            <person name="Couronne O."/>
            <person name="Tran-Gyamfi M."/>
            <person name="Aerts A."/>
            <person name="Altherr M."/>
            <person name="Ashworth L."/>
            <person name="Bajorek E."/>
            <person name="Black S."/>
            <person name="Branscomb E."/>
            <person name="Caenepeel S."/>
            <person name="Carrano A.V."/>
            <person name="Caoile C."/>
            <person name="Chan Y.M."/>
            <person name="Christensen M."/>
            <person name="Cleland C.A."/>
            <person name="Copeland A."/>
            <person name="Dalin E."/>
            <person name="Dehal P."/>
            <person name="Denys M."/>
            <person name="Detter J.C."/>
            <person name="Escobar J."/>
            <person name="Flowers D."/>
            <person name="Fotopulos D."/>
            <person name="Garcia C."/>
            <person name="Georgescu A.M."/>
            <person name="Glavina T."/>
            <person name="Gomez M."/>
            <person name="Gonzales E."/>
            <person name="Groza M."/>
            <person name="Hammon N."/>
            <person name="Hawkins T."/>
            <person name="Haydu L."/>
            <person name="Ho I."/>
            <person name="Huang W."/>
            <person name="Israni S."/>
            <person name="Jett J."/>
            <person name="Kadner K."/>
            <person name="Kimball H."/>
            <person name="Kobayashi A."/>
            <person name="Larionov V."/>
            <person name="Leem S.-H."/>
            <person name="Lopez F."/>
            <person name="Lou Y."/>
            <person name="Lowry S."/>
            <person name="Malfatti S."/>
            <person name="Martinez D."/>
            <person name="McCready P.M."/>
            <person name="Medina C."/>
            <person name="Morgan J."/>
            <person name="Nelson K."/>
            <person name="Nolan M."/>
            <person name="Ovcharenko I."/>
            <person name="Pitluck S."/>
            <person name="Pollard M."/>
            <person name="Popkie A.P."/>
            <person name="Predki P."/>
            <person name="Quan G."/>
            <person name="Ramirez L."/>
            <person name="Rash S."/>
            <person name="Retterer J."/>
            <person name="Rodriguez A."/>
            <person name="Rogers S."/>
            <person name="Salamov A."/>
            <person name="Salazar A."/>
            <person name="She X."/>
            <person name="Smith D."/>
            <person name="Slezak T."/>
            <person name="Solovyev V."/>
            <person name="Thayer N."/>
            <person name="Tice H."/>
            <person name="Tsai M."/>
            <person name="Ustaszewska A."/>
            <person name="Vo N."/>
            <person name="Wagner M."/>
            <person name="Wheeler J."/>
            <person name="Wu K."/>
            <person name="Xie G."/>
            <person name="Yang J."/>
            <person name="Dubchak I."/>
            <person name="Furey T.S."/>
            <person name="DeJong P."/>
            <person name="Dickson M."/>
            <person name="Gordon D."/>
            <person name="Eichler E.E."/>
            <person name="Pennacchio L.A."/>
            <person name="Richardson P."/>
            <person name="Stubbs L."/>
            <person name="Rokhsar D.S."/>
            <person name="Myers R.M."/>
            <person name="Rubin E.M."/>
            <person name="Lucas S.M."/>
        </authorList>
    </citation>
    <scope>NUCLEOTIDE SEQUENCE [LARGE SCALE GENOMIC DNA]</scope>
</reference>
<reference key="3">
    <citation type="submission" date="2005-07" db="EMBL/GenBank/DDBJ databases">
        <authorList>
            <person name="Mural R.J."/>
            <person name="Istrail S."/>
            <person name="Sutton G.G."/>
            <person name="Florea L."/>
            <person name="Halpern A.L."/>
            <person name="Mobarry C.M."/>
            <person name="Lippert R."/>
            <person name="Walenz B."/>
            <person name="Shatkay H."/>
            <person name="Dew I."/>
            <person name="Miller J.R."/>
            <person name="Flanigan M.J."/>
            <person name="Edwards N.J."/>
            <person name="Bolanos R."/>
            <person name="Fasulo D."/>
            <person name="Halldorsson B.V."/>
            <person name="Hannenhalli S."/>
            <person name="Turner R."/>
            <person name="Yooseph S."/>
            <person name="Lu F."/>
            <person name="Nusskern D.R."/>
            <person name="Shue B.C."/>
            <person name="Zheng X.H."/>
            <person name="Zhong F."/>
            <person name="Delcher A.L."/>
            <person name="Huson D.H."/>
            <person name="Kravitz S.A."/>
            <person name="Mouchard L."/>
            <person name="Reinert K."/>
            <person name="Remington K.A."/>
            <person name="Clark A.G."/>
            <person name="Waterman M.S."/>
            <person name="Eichler E.E."/>
            <person name="Adams M.D."/>
            <person name="Hunkapiller M.W."/>
            <person name="Myers E.W."/>
            <person name="Venter J.C."/>
        </authorList>
    </citation>
    <scope>NUCLEOTIDE SEQUENCE [LARGE SCALE GENOMIC DNA]</scope>
</reference>
<reference key="4">
    <citation type="journal article" date="2004" name="Genome Res.">
        <title>The status, quality, and expansion of the NIH full-length cDNA project: the Mammalian Gene Collection (MGC).</title>
        <authorList>
            <consortium name="The MGC Project Team"/>
        </authorList>
    </citation>
    <scope>NUCLEOTIDE SEQUENCE [LARGE SCALE MRNA] (ISOFORMS 3 AND 4)</scope>
    <source>
        <tissue>Lymph</tissue>
        <tissue>Pancreas</tissue>
        <tissue>Testis</tissue>
    </source>
</reference>
<reference key="5">
    <citation type="journal article" date="2012" name="Proc. Natl. Acad. Sci. U.S.A.">
        <title>N-terminal acetylome analyses and functional insights of the N-terminal acetyltransferase NatB.</title>
        <authorList>
            <person name="Van Damme P."/>
            <person name="Lasa M."/>
            <person name="Polevoda B."/>
            <person name="Gazquez C."/>
            <person name="Elosegui-Artola A."/>
            <person name="Kim D.S."/>
            <person name="De Juan-Pardo E."/>
            <person name="Demeyer K."/>
            <person name="Hole K."/>
            <person name="Larrea E."/>
            <person name="Timmerman E."/>
            <person name="Prieto J."/>
            <person name="Arnesen T."/>
            <person name="Sherman F."/>
            <person name="Gevaert K."/>
            <person name="Aldabe R."/>
        </authorList>
    </citation>
    <scope>ACETYLATION [LARGE SCALE ANALYSIS] AT SER-2</scope>
    <scope>CLEAVAGE OF INITIATOR METHIONINE [LARGE SCALE ANALYSIS]</scope>
    <scope>IDENTIFICATION BY MASS SPECTROMETRY [LARGE SCALE ANALYSIS]</scope>
</reference>
<reference key="6">
    <citation type="journal article" date="2014" name="J. Proteomics">
        <title>An enzyme assisted RP-RPLC approach for in-depth analysis of human liver phosphoproteome.</title>
        <authorList>
            <person name="Bian Y."/>
            <person name="Song C."/>
            <person name="Cheng K."/>
            <person name="Dong M."/>
            <person name="Wang F."/>
            <person name="Huang J."/>
            <person name="Sun D."/>
            <person name="Wang L."/>
            <person name="Ye M."/>
            <person name="Zou H."/>
        </authorList>
    </citation>
    <scope>IDENTIFICATION BY MASS SPECTROMETRY [LARGE SCALE ANALYSIS]</scope>
    <source>
        <tissue>Liver</tissue>
    </source>
</reference>
<reference key="7">
    <citation type="journal article" date="2016" name="PLoS Pathog.">
        <title>Characterization of RyDEN (C19orf66) as an interferon-stimulated cellular inhibitor against dengue virus replication.</title>
        <authorList>
            <person name="Suzuki Y."/>
            <person name="Chin W.X."/>
            <person name="Han Q."/>
            <person name="Ichiyama K."/>
            <person name="Lee C.H."/>
            <person name="Eyo Z.W."/>
            <person name="Ebina H."/>
            <person name="Takahashi H."/>
            <person name="Takahashi C."/>
            <person name="Tan B.H."/>
            <person name="Hishiki T."/>
            <person name="Ohba K."/>
            <person name="Matsuyama T."/>
            <person name="Koyanagi Y."/>
            <person name="Tan Y.J."/>
            <person name="Sawasaki T."/>
            <person name="Chu J.J."/>
            <person name="Vasudevan S.G."/>
            <person name="Sano K."/>
            <person name="Yamamoto N."/>
        </authorList>
    </citation>
    <scope>IDENTIFICATION BY MASS SPECTROMETRY</scope>
    <scope>FUNCTION</scope>
    <scope>SUBCELLULAR LOCATION</scope>
    <scope>INDUCTION</scope>
    <scope>INTERACTION WITH PABPC1</scope>
    <scope>IDENTIFICATION IN A COMPLEX WITH PABPC1 AND LARP1</scope>
    <scope>MUTAGENESIS OF 121-ARG--ARG-137</scope>
    <scope>NUCLEAR LOCALIZATION SIGNAL</scope>
    <scope>NUCLEAR EXPORT SIGNAL</scope>
</reference>
<reference key="8">
    <citation type="journal article" date="2017" name="J. Virol.">
        <title>IRAV (FLJ11286), an Interferon-Stimulated Gene with Antiviral Activity against Dengue Virus, Interacts with MOV10.</title>
        <authorList>
            <person name="Balinsky C.A."/>
            <person name="Schmeisser H."/>
            <person name="Wells A.I."/>
            <person name="Ganesan S."/>
            <person name="Jin T."/>
            <person name="Singh K."/>
            <person name="Zoon K.C."/>
        </authorList>
    </citation>
    <scope>FUNCTION</scope>
    <scope>INDUCTION BY DENV VIRUS</scope>
    <scope>SUBCELLULAR LOCATION</scope>
    <scope>INTERACTION WITH ELAV1; MOV10 AND UPF1</scope>
    <scope>RNA-BINDING</scope>
    <scope>INTERACTION WITH NS3 AND NS4A (MICROBIAL INFECTION)</scope>
</reference>
<reference key="9">
    <citation type="journal article" date="2019" name="Cell">
        <title>Regulation of HIV-1 Gag-Pol Expression by Shiftless, an Inhibitor of Programmed -1 Ribosomal Frameshifting.</title>
        <authorList>
            <person name="Wang X."/>
            <person name="Xuan Y."/>
            <person name="Han Y."/>
            <person name="Ding X."/>
            <person name="Ye K."/>
            <person name="Yang F."/>
            <person name="Gao P."/>
            <person name="Goff S.P."/>
            <person name="Gao G."/>
        </authorList>
    </citation>
    <scope>FUNCTION</scope>
    <scope>FUNCTION (ISOFORM 4)</scope>
    <scope>INDUCTION BY IFN</scope>
    <scope>ALTERNATIVE SPLICING</scope>
    <scope>RIBOSOMES-BINDING</scope>
    <scope>INTERACTION WITH GSPT1</scope>
    <scope>RNA-BINDING</scope>
</reference>
<reference key="10">
    <citation type="journal article" date="2019" name="J. Virol.">
        <title>C19ORF66 Broadly Escapes Virus-Induced Endonuclease Cleavage and Restricts Kaposi's Sarcoma-Associated Herpesvirus.</title>
        <authorList>
            <person name="Rodriguez W."/>
            <person name="Srivastav K."/>
            <person name="Muller M."/>
        </authorList>
    </citation>
    <scope>FUNCTION</scope>
</reference>
<reference key="11">
    <citation type="journal article" date="2020" name="PLoS Negl. Trop. Dis.">
        <title>C19orf66 interrupts Zika virus replication by inducing lysosomal degradation of viral NS3.</title>
        <authorList>
            <person name="Wu Y."/>
            <person name="Yang X."/>
            <person name="Yao Z."/>
            <person name="Dong X."/>
            <person name="Zhang D."/>
            <person name="Hu Y."/>
            <person name="Zhang S."/>
            <person name="Lin J."/>
            <person name="Chen J."/>
            <person name="An S."/>
            <person name="Ye H."/>
            <person name="Zhang S."/>
            <person name="Qiu Z."/>
            <person name="He Z."/>
            <person name="Huang M."/>
            <person name="Wei G."/>
            <person name="Zhu X."/>
        </authorList>
    </citation>
    <scope>FUNCTION</scope>
    <scope>INDUCTION BY IFN</scope>
    <scope>INTERACTION WITH ZIKA VIRUS PROTEIN NS3 (MICROBIAL INFECTION)</scope>
    <scope>SUBCELLULAR LOCATION</scope>
</reference>
<reference key="12">
    <citation type="journal article" date="2020" name="J. Hepatol.">
        <title>C19orf66 is an interferon-induced inhibitor of HCV replication that restricts formation of the viral replication organelle.</title>
        <authorList>
            <person name="Kinast V."/>
            <person name="Plociennikowska A."/>
            <person name="Angga K."/>
            <person name="Bracht T."/>
            <person name="Todt D."/>
            <person name="Brown R.J.P."/>
            <person name="Boldanova T."/>
            <person name="Zhang Y."/>
            <person name="Brueggemann Y."/>
            <person name="Friesland M."/>
            <person name="Engelmann M."/>
            <person name="Vieyres G."/>
            <person name="Broering R."/>
            <person name="Vondran F.W.R."/>
            <person name="Heim M.H."/>
            <person name="Sitek B."/>
            <person name="Bartenschlager R."/>
            <person name="Pietschmann T."/>
            <person name="Steinmann E."/>
        </authorList>
    </citation>
    <scope>FUNCTION</scope>
    <scope>INDUCTION BY IFN</scope>
</reference>
<protein>
    <recommendedName>
        <fullName evidence="13">Shiftless antiviral inhibitor of ribosomal frameshifting protein</fullName>
        <shortName evidence="12">SFL</shortName>
        <shortName evidence="13">SHFL</shortName>
    </recommendedName>
    <alternativeName>
        <fullName evidence="11">Interferon-regulated antiviral protein</fullName>
        <shortName evidence="11">IRAV</shortName>
    </alternativeName>
    <alternativeName>
        <fullName evidence="10">Repressor of yield of DENV protein</fullName>
        <shortName evidence="10">RyDEN</shortName>
    </alternativeName>
</protein>
<accession>Q9NUL5</accession>
<accession>A8MQT9</accession>
<accession>Q4G188</accession>
<accession>Q8IYH6</accession>
<accession>Q8N8V1</accession>
<comment type="function">
    <text evidence="2 3 4 5 6 7">Inhibits programmed -1 ribosomal frameshifting (-1PRF) of a variety of mRNAs from viruses, such as HIV1, and cellular genes, such as PEG10. Interacts with the -1PRF signal of target mRNA and translating ribosomes and causes premature translation termination at the frameshifting site (PubMed:30682371). Regulates HIV1 GAG-POL expression by inhibiting -1PRF (PubMed:30682371). Exhibits antiviral activity against dengue virus (DENV) and can inhibit the replication of all DENV serotypes. May block the protein translation of DENV RNA via its association with cellular mRNA-binding proteins and viral RNA. Also interrupts Zika virus replication by promoting viral NS3 degradation via a lysosome-dependent pathway (PubMed:32150556). Can also limit the replication of hepatitis C virus (HCV) by restricting formation of viral replication organelle, West Nile virus (WNV), Chikungunya virus (CHIKV), herpes simplex virus type 1 (HHV-1), herpes virus type 8 (HHV-8) and human adenovirus (PubMed:26735137, PubMed:27974568, PubMed:30944177, PubMed:32294532). Binds nucleic acids with a higher affinity for ssRNA and ssDNA than for dsDNA (PubMed:27974568).</text>
</comment>
<comment type="function">
    <text evidence="4">Isoform 4 does not inhibit programmed ribosomal frameshifting (-1PRF). Does not bind to ribosomes.</text>
</comment>
<comment type="subunit">
    <text evidence="2 3 4">Interacts with PABPC1 (PubMed:26735137). Found in a complex with PABPC1 and LARP1 (PubMed:26735137). Interacts with ELAV1, MOV10 and UPF1; the interactions increase in presence of RNA (PubMed:27974568). Binds to ribosomes (PubMed:30682371). Interacts with GSPT1 (PubMed:30682371).</text>
</comment>
<comment type="subunit">
    <text evidence="3">(Microbial infection) Interacts with the human dengue virus DENV proteins NS3 and NS4A.</text>
</comment>
<comment type="subunit">
    <text evidence="6">(Microbial infection) Interacts with Zika virus protein NS3; this interaction promotes viral NS3 degradation.</text>
</comment>
<comment type="interaction">
    <interactant intactId="EBI-10313866">
        <id>Q9NUL5</id>
    </interactant>
    <interactant intactId="EBI-10173507">
        <id>Q6UY14-3</id>
        <label>ADAMTSL4</label>
    </interactant>
    <organismsDiffer>false</organismsDiffer>
    <experiments>3</experiments>
</comment>
<comment type="interaction">
    <interactant intactId="EBI-10313866">
        <id>Q9NUL5</id>
    </interactant>
    <interactant intactId="EBI-10179719">
        <id>A2RRN7</id>
        <label>CADPS</label>
    </interactant>
    <organismsDiffer>false</organismsDiffer>
    <experiments>3</experiments>
</comment>
<comment type="interaction">
    <interactant intactId="EBI-10313866">
        <id>Q9NUL5</id>
    </interactant>
    <interactant intactId="EBI-10171416">
        <id>Q96JN2-2</id>
        <label>CCDC136</label>
    </interactant>
    <organismsDiffer>false</organismsDiffer>
    <experiments>3</experiments>
</comment>
<comment type="interaction">
    <interactant intactId="EBI-10313866">
        <id>Q9NUL5</id>
    </interactant>
    <interactant intactId="EBI-10253641">
        <id>Q6PGQ1</id>
        <label>DRICH1</label>
    </interactant>
    <organismsDiffer>false</organismsDiffer>
    <experiments>3</experiments>
</comment>
<comment type="interaction">
    <interactant intactId="EBI-10313866">
        <id>Q9NUL5</id>
    </interactant>
    <interactant intactId="EBI-465804">
        <id>Q96EV8</id>
        <label>DTNBP1</label>
    </interactant>
    <organismsDiffer>false</organismsDiffer>
    <experiments>3</experiments>
</comment>
<comment type="interaction">
    <interactant intactId="EBI-10313866">
        <id>Q9NUL5</id>
    </interactant>
    <interactant intactId="EBI-745305">
        <id>Q13422</id>
        <label>IKZF1</label>
    </interactant>
    <organismsDiffer>false</organismsDiffer>
    <experiments>3</experiments>
</comment>
<comment type="interaction">
    <interactant intactId="EBI-10313866">
        <id>Q9NUL5</id>
    </interactant>
    <interactant intactId="EBI-10171697">
        <id>Q6A162</id>
        <label>KRT40</label>
    </interactant>
    <organismsDiffer>false</organismsDiffer>
    <experiments>3</experiments>
</comment>
<comment type="interaction">
    <interactant intactId="EBI-10313866">
        <id>Q9NUL5</id>
    </interactant>
    <interactant intactId="EBI-10172150">
        <id>P60370</id>
        <label>KRTAP10-5</label>
    </interactant>
    <organismsDiffer>false</organismsDiffer>
    <experiments>3</experiments>
</comment>
<comment type="interaction">
    <interactant intactId="EBI-10313866">
        <id>Q9NUL5</id>
    </interactant>
    <interactant intactId="EBI-10172290">
        <id>P60409</id>
        <label>KRTAP10-7</label>
    </interactant>
    <organismsDiffer>false</organismsDiffer>
    <experiments>3</experiments>
</comment>
<comment type="interaction">
    <interactant intactId="EBI-10313866">
        <id>Q9NUL5</id>
    </interactant>
    <interactant intactId="EBI-10171774">
        <id>P60410</id>
        <label>KRTAP10-8</label>
    </interactant>
    <organismsDiffer>false</organismsDiffer>
    <experiments>3</experiments>
</comment>
<comment type="interaction">
    <interactant intactId="EBI-10313866">
        <id>Q9NUL5</id>
    </interactant>
    <interactant intactId="EBI-10172052">
        <id>P60411</id>
        <label>KRTAP10-9</label>
    </interactant>
    <organismsDiffer>false</organismsDiffer>
    <experiments>3</experiments>
</comment>
<comment type="interaction">
    <interactant intactId="EBI-10313866">
        <id>Q9NUL5</id>
    </interactant>
    <interactant intactId="EBI-10196781">
        <id>P0C7H8</id>
        <label>KRTAP2-3</label>
    </interactant>
    <organismsDiffer>false</organismsDiffer>
    <experiments>3</experiments>
</comment>
<comment type="interaction">
    <interactant intactId="EBI-10313866">
        <id>Q9NUL5</id>
    </interactant>
    <interactant intactId="EBI-739863">
        <id>Q9BQ66</id>
        <label>KRTAP4-12</label>
    </interactant>
    <organismsDiffer>false</organismsDiffer>
    <experiments>3</experiments>
</comment>
<comment type="interaction">
    <interactant intactId="EBI-10313866">
        <id>Q9NUL5</id>
    </interactant>
    <interactant intactId="EBI-10172511">
        <id>Q9BYR5</id>
        <label>KRTAP4-2</label>
    </interactant>
    <organismsDiffer>false</organismsDiffer>
    <experiments>3</experiments>
</comment>
<comment type="interaction">
    <interactant intactId="EBI-10313866">
        <id>Q9NUL5</id>
    </interactant>
    <interactant intactId="EBI-3958099">
        <id>P26371</id>
        <label>KRTAP5-9</label>
    </interactant>
    <organismsDiffer>false</organismsDiffer>
    <experiments>3</experiments>
</comment>
<comment type="interaction">
    <interactant intactId="EBI-10313866">
        <id>Q9NUL5</id>
    </interactant>
    <interactant intactId="EBI-1044640">
        <id>Q9BYQ4</id>
        <label>KRTAP9-2</label>
    </interactant>
    <organismsDiffer>false</organismsDiffer>
    <experiments>3</experiments>
</comment>
<comment type="interaction">
    <interactant intactId="EBI-10313866">
        <id>Q9NUL5</id>
    </interactant>
    <interactant intactId="EBI-741037">
        <id>Q9BRK4</id>
        <label>LZTS2</label>
    </interactant>
    <organismsDiffer>false</organismsDiffer>
    <experiments>3</experiments>
</comment>
<comment type="interaction">
    <interactant intactId="EBI-10313866">
        <id>Q9NUL5</id>
    </interactant>
    <interactant intactId="EBI-740978">
        <id>P43355</id>
        <label>MAGEA1</label>
    </interactant>
    <organismsDiffer>false</organismsDiffer>
    <experiments>3</experiments>
</comment>
<comment type="interaction">
    <interactant intactId="EBI-10313866">
        <id>Q9NUL5</id>
    </interactant>
    <interactant intactId="EBI-724076">
        <id>Q99750</id>
        <label>MDFI</label>
    </interactant>
    <organismsDiffer>false</organismsDiffer>
    <experiments>3</experiments>
</comment>
<comment type="interaction">
    <interactant intactId="EBI-10313866">
        <id>Q9NUL5</id>
    </interactant>
    <interactant intactId="EBI-748397">
        <id>P50222</id>
        <label>MEOX2</label>
    </interactant>
    <organismsDiffer>false</organismsDiffer>
    <experiments>3</experiments>
</comment>
<comment type="interaction">
    <interactant intactId="EBI-10313866">
        <id>Q9NUL5</id>
    </interactant>
    <interactant intactId="EBI-10172526">
        <id>Q9UJV3-2</id>
        <label>MID2</label>
    </interactant>
    <organismsDiffer>false</organismsDiffer>
    <experiments>3</experiments>
</comment>
<comment type="interaction">
    <interactant intactId="EBI-10313866">
        <id>Q9NUL5</id>
    </interactant>
    <interactant intactId="EBI-742948">
        <id>Q5JR59</id>
        <label>MTUS2</label>
    </interactant>
    <organismsDiffer>false</organismsDiffer>
    <experiments>3</experiments>
</comment>
<comment type="interaction">
    <interactant intactId="EBI-10313866">
        <id>Q9NUL5</id>
    </interactant>
    <interactant intactId="EBI-945833">
        <id>Q7Z3S9</id>
        <label>NOTCH2NLA</label>
    </interactant>
    <organismsDiffer>false</organismsDiffer>
    <experiments>3</experiments>
</comment>
<comment type="interaction">
    <interactant intactId="EBI-10313866">
        <id>Q9NUL5</id>
    </interactant>
    <interactant intactId="EBI-1105124">
        <id>Q5VU43</id>
        <label>PDE4DIP</label>
    </interactant>
    <organismsDiffer>false</organismsDiffer>
    <experiments>3</experiments>
</comment>
<comment type="interaction">
    <interactant intactId="EBI-10313866">
        <id>Q9NUL5</id>
    </interactant>
    <interactant intactId="EBI-742487">
        <id>O43597</id>
        <label>SPRY2</label>
    </interactant>
    <organismsDiffer>false</organismsDiffer>
    <experiments>3</experiments>
</comment>
<comment type="interaction">
    <interactant intactId="EBI-10313866">
        <id>Q9NUL5</id>
    </interactant>
    <interactant intactId="EBI-2212028">
        <id>Q9Y2D8</id>
        <label>SSX2IP</label>
    </interactant>
    <organismsDiffer>false</organismsDiffer>
    <experiments>3</experiments>
</comment>
<comment type="interaction">
    <interactant intactId="EBI-10313866">
        <id>Q9NUL5</id>
    </interactant>
    <interactant intactId="EBI-533224">
        <id>P15884</id>
        <label>TCF4</label>
    </interactant>
    <organismsDiffer>false</organismsDiffer>
    <experiments>3</experiments>
</comment>
<comment type="interaction">
    <interactant intactId="EBI-10313866">
        <id>Q9NUL5</id>
    </interactant>
    <interactant intactId="EBI-710997">
        <id>P54274</id>
        <label>TERF1</label>
    </interactant>
    <organismsDiffer>false</organismsDiffer>
    <experiments>2</experiments>
</comment>
<comment type="interaction">
    <interactant intactId="EBI-10313866">
        <id>Q9NUL5</id>
    </interactant>
    <interactant intactId="EBI-949753">
        <id>Q63HR2</id>
        <label>TNS2</label>
    </interactant>
    <organismsDiffer>false</organismsDiffer>
    <experiments>4</experiments>
</comment>
<comment type="interaction">
    <interactant intactId="EBI-10313866">
        <id>Q9NUL5</id>
    </interactant>
    <interactant intactId="EBI-359224">
        <id>Q13077</id>
        <label>TRAF1</label>
    </interactant>
    <organismsDiffer>false</organismsDiffer>
    <experiments>3</experiments>
</comment>
<comment type="interaction">
    <interactant intactId="EBI-22000547">
        <id>Q9NUL5-3</id>
    </interactant>
    <interactant intactId="EBI-10976677">
        <id>G5E9A7</id>
        <label>DMWD</label>
    </interactant>
    <organismsDiffer>false</organismsDiffer>
    <experiments>3</experiments>
</comment>
<comment type="interaction">
    <interactant intactId="EBI-22000547">
        <id>Q9NUL5-3</id>
    </interactant>
    <interactant intactId="EBI-747754">
        <id>P28799</id>
        <label>GRN</label>
    </interactant>
    <organismsDiffer>false</organismsDiffer>
    <experiments>3</experiments>
</comment>
<comment type="interaction">
    <interactant intactId="EBI-22000547">
        <id>Q9NUL5-3</id>
    </interactant>
    <interactant intactId="EBI-352682">
        <id>P04792</id>
        <label>HSPB1</label>
    </interactant>
    <organismsDiffer>false</organismsDiffer>
    <experiments>3</experiments>
</comment>
<comment type="interaction">
    <interactant intactId="EBI-22000547">
        <id>Q9NUL5-3</id>
    </interactant>
    <interactant intactId="EBI-10975473">
        <id>O60333-2</id>
        <label>KIF1B</label>
    </interactant>
    <organismsDiffer>false</organismsDiffer>
    <experiments>3</experiments>
</comment>
<comment type="interaction">
    <interactant intactId="EBI-22000547">
        <id>Q9NUL5-3</id>
    </interactant>
    <interactant intactId="EBI-396669">
        <id>Q9Y3C5</id>
        <label>RNF11</label>
    </interactant>
    <organismsDiffer>false</organismsDiffer>
    <experiments>3</experiments>
</comment>
<comment type="interaction">
    <interactant intactId="EBI-22000547">
        <id>Q9NUL5-3</id>
    </interactant>
    <interactant intactId="EBI-5235340">
        <id>Q7Z699</id>
        <label>SPRED1</label>
    </interactant>
    <organismsDiffer>false</organismsDiffer>
    <experiments>3</experiments>
</comment>
<comment type="interaction">
    <interactant intactId="EBI-22000547">
        <id>Q9NUL5-3</id>
    </interactant>
    <interactant intactId="EBI-720609">
        <id>O76024</id>
        <label>WFS1</label>
    </interactant>
    <organismsDiffer>false</organismsDiffer>
    <experiments>3</experiments>
</comment>
<comment type="interaction">
    <interactant intactId="EBI-11955083">
        <id>Q9NUL5-4</id>
    </interactant>
    <interactant intactId="EBI-10173507">
        <id>Q6UY14-3</id>
        <label>ADAMTSL4</label>
    </interactant>
    <organismsDiffer>false</organismsDiffer>
    <experiments>3</experiments>
</comment>
<comment type="interaction">
    <interactant intactId="EBI-11955083">
        <id>Q9NUL5-4</id>
    </interactant>
    <interactant intactId="EBI-748961">
        <id>O95273</id>
        <label>CCNDBP1</label>
    </interactant>
    <organismsDiffer>false</organismsDiffer>
    <experiments>3</experiments>
</comment>
<comment type="interaction">
    <interactant intactId="EBI-11955083">
        <id>Q9NUL5-4</id>
    </interactant>
    <interactant intactId="EBI-3867333">
        <id>A8MQ03</id>
        <label>CYSRT1</label>
    </interactant>
    <organismsDiffer>false</organismsDiffer>
    <experiments>3</experiments>
</comment>
<comment type="interaction">
    <interactant intactId="EBI-11955083">
        <id>Q9NUL5-4</id>
    </interactant>
    <interactant intactId="EBI-10253641">
        <id>Q6PGQ1</id>
        <label>DRICH1</label>
    </interactant>
    <organismsDiffer>false</organismsDiffer>
    <experiments>3</experiments>
</comment>
<comment type="interaction">
    <interactant intactId="EBI-11955083">
        <id>Q9NUL5-4</id>
    </interactant>
    <interactant intactId="EBI-739789">
        <id>Q92997</id>
        <label>DVL3</label>
    </interactant>
    <organismsDiffer>false</organismsDiffer>
    <experiments>3</experiments>
</comment>
<comment type="interaction">
    <interactant intactId="EBI-11955083">
        <id>Q9NUL5-4</id>
    </interactant>
    <interactant intactId="EBI-750641">
        <id>Q5TD97</id>
        <label>FHL5</label>
    </interactant>
    <organismsDiffer>false</organismsDiffer>
    <experiments>3</experiments>
</comment>
<comment type="interaction">
    <interactant intactId="EBI-11955083">
        <id>Q9NUL5-4</id>
    </interactant>
    <interactant intactId="EBI-7116203">
        <id>O75031</id>
        <label>HSF2BP</label>
    </interactant>
    <organismsDiffer>false</organismsDiffer>
    <experiments>3</experiments>
</comment>
<comment type="interaction">
    <interactant intactId="EBI-11955083">
        <id>Q9NUL5-4</id>
    </interactant>
    <interactant intactId="EBI-6509505">
        <id>Q0VD86</id>
        <label>INCA1</label>
    </interactant>
    <organismsDiffer>false</organismsDiffer>
    <experiments>3</experiments>
</comment>
<comment type="interaction">
    <interactant intactId="EBI-11955083">
        <id>Q9NUL5-4</id>
    </interactant>
    <interactant intactId="EBI-2796400">
        <id>Q9UIH9</id>
        <label>KLF15</label>
    </interactant>
    <organismsDiffer>false</organismsDiffer>
    <experiments>3</experiments>
</comment>
<comment type="interaction">
    <interactant intactId="EBI-11955083">
        <id>Q9NUL5-4</id>
    </interactant>
    <interactant intactId="EBI-948001">
        <id>Q15323</id>
        <label>KRT31</label>
    </interactant>
    <organismsDiffer>false</organismsDiffer>
    <experiments>3</experiments>
</comment>
<comment type="interaction">
    <interactant intactId="EBI-11955083">
        <id>Q9NUL5-4</id>
    </interactant>
    <interactant intactId="EBI-10171697">
        <id>Q6A162</id>
        <label>KRT40</label>
    </interactant>
    <organismsDiffer>false</organismsDiffer>
    <experiments>3</experiments>
</comment>
<comment type="interaction">
    <interactant intactId="EBI-11955083">
        <id>Q9NUL5-4</id>
    </interactant>
    <interactant intactId="EBI-11959885">
        <id>Q07627</id>
        <label>KRTAP1-1</label>
    </interactant>
    <organismsDiffer>false</organismsDiffer>
    <experiments>3</experiments>
</comment>
<comment type="interaction">
    <interactant intactId="EBI-11955083">
        <id>Q9NUL5-4</id>
    </interactant>
    <interactant intactId="EBI-11749135">
        <id>Q8IUG1</id>
        <label>KRTAP1-3</label>
    </interactant>
    <organismsDiffer>false</organismsDiffer>
    <experiments>3</experiments>
</comment>
<comment type="interaction">
    <interactant intactId="EBI-11955083">
        <id>Q9NUL5-4</id>
    </interactant>
    <interactant intactId="EBI-11741292">
        <id>Q9BYS1</id>
        <label>KRTAP1-5</label>
    </interactant>
    <organismsDiffer>false</organismsDiffer>
    <experiments>3</experiments>
</comment>
<comment type="interaction">
    <interactant intactId="EBI-11955083">
        <id>Q9NUL5-4</id>
    </interactant>
    <interactant intactId="EBI-10172150">
        <id>P60370</id>
        <label>KRTAP10-5</label>
    </interactant>
    <organismsDiffer>false</organismsDiffer>
    <experiments>3</experiments>
</comment>
<comment type="interaction">
    <interactant intactId="EBI-11955083">
        <id>Q9NUL5-4</id>
    </interactant>
    <interactant intactId="EBI-10172290">
        <id>P60409</id>
        <label>KRTAP10-7</label>
    </interactant>
    <organismsDiffer>false</organismsDiffer>
    <experiments>3</experiments>
</comment>
<comment type="interaction">
    <interactant intactId="EBI-11955083">
        <id>Q9NUL5-4</id>
    </interactant>
    <interactant intactId="EBI-10171774">
        <id>P60410</id>
        <label>KRTAP10-8</label>
    </interactant>
    <organismsDiffer>false</organismsDiffer>
    <experiments>3</experiments>
</comment>
<comment type="interaction">
    <interactant intactId="EBI-11955083">
        <id>Q9NUL5-4</id>
    </interactant>
    <interactant intactId="EBI-10172052">
        <id>P60411</id>
        <label>KRTAP10-9</label>
    </interactant>
    <organismsDiffer>false</organismsDiffer>
    <experiments>3</experiments>
</comment>
<comment type="interaction">
    <interactant intactId="EBI-11955083">
        <id>Q9NUL5-4</id>
    </interactant>
    <interactant intactId="EBI-11953334">
        <id>P60328</id>
        <label>KRTAP12-3</label>
    </interactant>
    <organismsDiffer>false</organismsDiffer>
    <experiments>3</experiments>
</comment>
<comment type="interaction">
    <interactant intactId="EBI-11955083">
        <id>Q9NUL5-4</id>
    </interactant>
    <interactant intactId="EBI-11988175">
        <id>Q9BYP8</id>
        <label>KRTAP17-1</label>
    </interactant>
    <organismsDiffer>false</organismsDiffer>
    <experiments>3</experiments>
</comment>
<comment type="interaction">
    <interactant intactId="EBI-11955083">
        <id>Q9NUL5-4</id>
    </interactant>
    <interactant intactId="EBI-14065470">
        <id>Q9BYR9</id>
        <label>KRTAP2-4</label>
    </interactant>
    <organismsDiffer>false</organismsDiffer>
    <experiments>3</experiments>
</comment>
<comment type="interaction">
    <interactant intactId="EBI-11955083">
        <id>Q9NUL5-4</id>
    </interactant>
    <interactant intactId="EBI-10302392">
        <id>Q9BYQ6</id>
        <label>KRTAP4-11</label>
    </interactant>
    <organismsDiffer>false</organismsDiffer>
    <experiments>5</experiments>
</comment>
<comment type="interaction">
    <interactant intactId="EBI-11955083">
        <id>Q9NUL5-4</id>
    </interactant>
    <interactant intactId="EBI-739863">
        <id>Q9BQ66</id>
        <label>KRTAP4-12</label>
    </interactant>
    <organismsDiffer>false</organismsDiffer>
    <experiments>3</experiments>
</comment>
<comment type="interaction">
    <interactant intactId="EBI-11955083">
        <id>Q9NUL5-4</id>
    </interactant>
    <interactant intactId="EBI-11958132">
        <id>Q9BYR3</id>
        <label>KRTAP4-4</label>
    </interactant>
    <organismsDiffer>false</organismsDiffer>
    <experiments>3</experiments>
</comment>
<comment type="interaction">
    <interactant intactId="EBI-11955083">
        <id>Q9NUL5-4</id>
    </interactant>
    <interactant intactId="EBI-11993254">
        <id>Q9BYR2</id>
        <label>KRTAP4-5</label>
    </interactant>
    <organismsDiffer>false</organismsDiffer>
    <experiments>3</experiments>
</comment>
<comment type="interaction">
    <interactant intactId="EBI-11955083">
        <id>Q9NUL5-4</id>
    </interactant>
    <interactant intactId="EBI-11987425">
        <id>Q6L8G8</id>
        <label>KRTAP5-7</label>
    </interactant>
    <organismsDiffer>false</organismsDiffer>
    <experiments>3</experiments>
</comment>
<comment type="interaction">
    <interactant intactId="EBI-11955083">
        <id>Q9NUL5-4</id>
    </interactant>
    <interactant intactId="EBI-3958099">
        <id>P26371</id>
        <label>KRTAP5-9</label>
    </interactant>
    <organismsDiffer>false</organismsDiffer>
    <experiments>3</experiments>
</comment>
<comment type="interaction">
    <interactant intactId="EBI-11955083">
        <id>Q9NUL5-4</id>
    </interactant>
    <interactant intactId="EBI-1044640">
        <id>Q9BYQ4</id>
        <label>KRTAP9-2</label>
    </interactant>
    <organismsDiffer>false</organismsDiffer>
    <experiments>3</experiments>
</comment>
<comment type="interaction">
    <interactant intactId="EBI-11955083">
        <id>Q9NUL5-4</id>
    </interactant>
    <interactant intactId="EBI-1043191">
        <id>Q9BYQ3</id>
        <label>KRTAP9-3</label>
    </interactant>
    <organismsDiffer>false</organismsDiffer>
    <experiments>3</experiments>
</comment>
<comment type="interaction">
    <interactant intactId="EBI-11955083">
        <id>Q9NUL5-4</id>
    </interactant>
    <interactant intactId="EBI-739832">
        <id>Q8TBB1</id>
        <label>LNX1</label>
    </interactant>
    <organismsDiffer>false</organismsDiffer>
    <experiments>3</experiments>
</comment>
<comment type="interaction">
    <interactant intactId="EBI-11955083">
        <id>Q9NUL5-4</id>
    </interactant>
    <interactant intactId="EBI-741355">
        <id>Q96LR2</id>
        <label>LURAP1</label>
    </interactant>
    <organismsDiffer>false</organismsDiffer>
    <experiments>3</experiments>
</comment>
<comment type="interaction">
    <interactant intactId="EBI-11955083">
        <id>Q9NUL5-4</id>
    </interactant>
    <interactant intactId="EBI-724076">
        <id>Q99750</id>
        <label>MDFI</label>
    </interactant>
    <organismsDiffer>false</organismsDiffer>
    <experiments>3</experiments>
</comment>
<comment type="interaction">
    <interactant intactId="EBI-11955083">
        <id>Q9NUL5-4</id>
    </interactant>
    <interactant intactId="EBI-16439278">
        <id>Q6FHY5</id>
        <label>MEOX2</label>
    </interactant>
    <organismsDiffer>false</organismsDiffer>
    <experiments>3</experiments>
</comment>
<comment type="interaction">
    <interactant intactId="EBI-11955083">
        <id>Q9NUL5-4</id>
    </interactant>
    <interactant intactId="EBI-11522433">
        <id>Q5JR59-3</id>
        <label>MTUS2</label>
    </interactant>
    <organismsDiffer>false</organismsDiffer>
    <experiments>3</experiments>
</comment>
<comment type="interaction">
    <interactant intactId="EBI-11955083">
        <id>Q9NUL5-4</id>
    </interactant>
    <interactant intactId="EBI-22310682">
        <id>P0DPK4</id>
        <label>NOTCH2NLC</label>
    </interactant>
    <organismsDiffer>false</organismsDiffer>
    <experiments>3</experiments>
</comment>
<comment type="interaction">
    <interactant intactId="EBI-11955083">
        <id>Q9NUL5-4</id>
    </interactant>
    <interactant intactId="EBI-11956269">
        <id>Q92824-2</id>
        <label>PCSK5</label>
    </interactant>
    <organismsDiffer>false</organismsDiffer>
    <experiments>3</experiments>
</comment>
<comment type="interaction">
    <interactant intactId="EBI-11955083">
        <id>Q9NUL5-4</id>
    </interactant>
    <interactant intactId="EBI-79165">
        <id>Q9NRD5</id>
        <label>PICK1</label>
    </interactant>
    <organismsDiffer>false</organismsDiffer>
    <experiments>3</experiments>
</comment>
<comment type="interaction">
    <interactant intactId="EBI-11955083">
        <id>Q9NUL5-4</id>
    </interactant>
    <interactant intactId="EBI-641666">
        <id>Q15172</id>
        <label>PPP2R5A</label>
    </interactant>
    <organismsDiffer>false</organismsDiffer>
    <experiments>3</experiments>
</comment>
<comment type="interaction">
    <interactant intactId="EBI-11955083">
        <id>Q9NUL5-4</id>
    </interactant>
    <interactant intactId="EBI-11955083">
        <id>Q9NUL5-4</id>
        <label>SHFL</label>
    </interactant>
    <organismsDiffer>false</organismsDiffer>
    <experiments>3</experiments>
</comment>
<comment type="interaction">
    <interactant intactId="EBI-11955083">
        <id>Q9NUL5-4</id>
    </interactant>
    <interactant intactId="EBI-2212028">
        <id>Q9Y2D8</id>
        <label>SSX2IP</label>
    </interactant>
    <organismsDiffer>false</organismsDiffer>
    <experiments>3</experiments>
</comment>
<comment type="interaction">
    <interactant intactId="EBI-11955083">
        <id>Q9NUL5-4</id>
    </interactant>
    <interactant intactId="EBI-12827077">
        <id>Q6N022</id>
        <label>TENM4</label>
    </interactant>
    <organismsDiffer>false</organismsDiffer>
    <experiments>3</experiments>
</comment>
<comment type="interaction">
    <interactant intactId="EBI-11955083">
        <id>Q9NUL5-4</id>
    </interactant>
    <interactant intactId="EBI-11741437">
        <id>Q08117-2</id>
        <label>TLE5</label>
    </interactant>
    <organismsDiffer>false</organismsDiffer>
    <experiments>3</experiments>
</comment>
<comment type="interaction">
    <interactant intactId="EBI-11955083">
        <id>Q9NUL5-4</id>
    </interactant>
    <interactant intactId="EBI-359224">
        <id>Q13077</id>
        <label>TRAF1</label>
    </interactant>
    <organismsDiffer>false</organismsDiffer>
    <experiments>3</experiments>
</comment>
<comment type="interaction">
    <interactant intactId="EBI-11955083">
        <id>Q9NUL5-4</id>
    </interactant>
    <interactant intactId="EBI-492476">
        <id>Q96RU7</id>
        <label>TRIB3</label>
    </interactant>
    <organismsDiffer>false</organismsDiffer>
    <experiments>3</experiments>
</comment>
<comment type="interaction">
    <interactant intactId="EBI-11955083">
        <id>Q9NUL5-4</id>
    </interactant>
    <interactant intactId="EBI-5235829">
        <id>Q8IWZ5</id>
        <label>TRIM42</label>
    </interactant>
    <organismsDiffer>false</organismsDiffer>
    <experiments>3</experiments>
</comment>
<comment type="interaction">
    <interactant intactId="EBI-11955083">
        <id>Q9NUL5-4</id>
    </interactant>
    <interactant intactId="EBI-11957238">
        <id>Q2TAL6</id>
        <label>VWC2</label>
    </interactant>
    <organismsDiffer>false</organismsDiffer>
    <experiments>3</experiments>
</comment>
<comment type="interaction">
    <interactant intactId="EBI-11955083">
        <id>Q9NUL5-4</id>
    </interactant>
    <interactant intactId="EBI-5667516">
        <id>Q9Y2P0</id>
        <label>ZNF835</label>
    </interactant>
    <organismsDiffer>false</organismsDiffer>
    <experiments>3</experiments>
</comment>
<comment type="subcellular location">
    <subcellularLocation>
        <location evidence="2 6">Cytoplasm</location>
    </subcellularLocation>
    <subcellularLocation>
        <location evidence="2">Nucleus</location>
    </subcellularLocation>
    <subcellularLocation>
        <location evidence="3">Cytoplasm</location>
        <location evidence="3">P-body</location>
    </subcellularLocation>
    <text evidence="2 3">Predominantly found in the cytoplasm (PubMed:26735137). After infection, relocalizes to the DENV replication complex in perinuclear regions (PubMed:27974568).</text>
</comment>
<comment type="alternative products">
    <event type="alternative splicing"/>
    <isoform>
        <id>Q9NUL5-1</id>
        <name>1</name>
        <name evidence="12">SFL</name>
        <sequence type="displayed"/>
    </isoform>
    <isoform>
        <id>Q9NUL5-2</id>
        <name>2</name>
        <sequence type="described" ref="VSP_031272"/>
    </isoform>
    <isoform>
        <id>Q9NUL5-3</id>
        <name>3</name>
        <sequence type="described" ref="VSP_031273"/>
    </isoform>
    <isoform>
        <id>Q9NUL5-4</id>
        <name>4</name>
        <name evidence="12">SFLS</name>
        <sequence type="described" ref="VSP_031274"/>
    </isoform>
</comment>
<comment type="induction">
    <text evidence="2 3 4">Up-regulated by interferon (IFN) treatment (PubMed:26735137, PubMed:27974568, PubMed:30682371, PubMed:32294532). Expression increases in response to DENV infection in an IFN-dependent manner (PubMed:27974568).</text>
</comment>
<comment type="similarity">
    <text evidence="13">Belongs to the SHFL family.</text>
</comment>
<proteinExistence type="evidence at protein level"/>